<evidence type="ECO:0000250" key="1">
    <source>
        <dbReference type="UniProtKB" id="J7I4B7"/>
    </source>
</evidence>
<evidence type="ECO:0000255" key="2"/>
<evidence type="ECO:0000305" key="3"/>
<evidence type="ECO:0000312" key="4">
    <source>
        <dbReference type="EMBL" id="BAA07749.1"/>
    </source>
</evidence>
<gene>
    <name evidence="1" type="primary">wbdD</name>
    <name evidence="4" type="synonym">ORF708</name>
</gene>
<keyword id="KW-0067">ATP-binding</keyword>
<keyword id="KW-0997">Cell inner membrane</keyword>
<keyword id="KW-1003">Cell membrane</keyword>
<keyword id="KW-0175">Coiled coil</keyword>
<keyword id="KW-0418">Kinase</keyword>
<keyword id="KW-0448">Lipopolysaccharide biosynthesis</keyword>
<keyword id="KW-0472">Membrane</keyword>
<keyword id="KW-0489">Methyltransferase</keyword>
<keyword id="KW-0547">Nucleotide-binding</keyword>
<keyword id="KW-0949">S-adenosyl-L-methionine</keyword>
<keyword id="KW-0808">Transferase</keyword>
<feature type="chain" id="PRO_0000430677" description="O-antigen chain terminator bifunctional methyltransferase/kinase WbdD">
    <location>
        <begin position="1"/>
        <end position="708"/>
    </location>
</feature>
<feature type="region of interest" description="Methyltransferase" evidence="1">
    <location>
        <begin position="1"/>
        <end position="210"/>
    </location>
</feature>
<feature type="region of interest" description="Kinase" evidence="1">
    <location>
        <begin position="211"/>
        <end position="459"/>
    </location>
</feature>
<feature type="region of interest" description="Required for membrane-binding" evidence="1">
    <location>
        <begin position="601"/>
        <end position="669"/>
    </location>
</feature>
<feature type="region of interest" description="Required for localizing WbdA to the membrane" evidence="1">
    <location>
        <begin position="687"/>
        <end position="708"/>
    </location>
</feature>
<feature type="coiled-coil region" evidence="2">
    <location>
        <begin position="485"/>
        <end position="594"/>
    </location>
</feature>
<feature type="binding site" evidence="1">
    <location>
        <begin position="16"/>
        <end position="17"/>
    </location>
    <ligand>
        <name>S-adenosyl-L-methionine</name>
        <dbReference type="ChEBI" id="CHEBI:59789"/>
    </ligand>
</feature>
<feature type="binding site" evidence="1">
    <location>
        <position position="36"/>
    </location>
    <ligand>
        <name>S-adenosyl-L-methionine</name>
        <dbReference type="ChEBI" id="CHEBI:59789"/>
    </ligand>
</feature>
<feature type="binding site" evidence="1">
    <location>
        <position position="61"/>
    </location>
    <ligand>
        <name>S-adenosyl-L-methionine</name>
        <dbReference type="ChEBI" id="CHEBI:59789"/>
    </ligand>
</feature>
<feature type="binding site" evidence="1">
    <location>
        <begin position="82"/>
        <end position="87"/>
    </location>
    <ligand>
        <name>S-adenosyl-L-methionine</name>
        <dbReference type="ChEBI" id="CHEBI:59789"/>
    </ligand>
</feature>
<feature type="binding site" evidence="1">
    <location>
        <begin position="108"/>
        <end position="111"/>
    </location>
    <ligand>
        <name>S-adenosyl-L-methionine</name>
        <dbReference type="ChEBI" id="CHEBI:59789"/>
    </ligand>
</feature>
<feature type="binding site" evidence="1">
    <location>
        <position position="128"/>
    </location>
    <ligand>
        <name>S-adenosyl-L-methionine</name>
        <dbReference type="ChEBI" id="CHEBI:59789"/>
    </ligand>
</feature>
<feature type="binding site" evidence="1">
    <location>
        <position position="229"/>
    </location>
    <ligand>
        <name>ATP</name>
        <dbReference type="ChEBI" id="CHEBI:30616"/>
    </ligand>
</feature>
<feature type="binding site" evidence="1">
    <location>
        <position position="237"/>
    </location>
    <ligand>
        <name>ATP</name>
        <dbReference type="ChEBI" id="CHEBI:30616"/>
    </ligand>
</feature>
<feature type="binding site" evidence="1">
    <location>
        <begin position="241"/>
        <end position="243"/>
    </location>
    <ligand>
        <name>ATP</name>
        <dbReference type="ChEBI" id="CHEBI:30616"/>
    </ligand>
</feature>
<feature type="binding site" evidence="1">
    <location>
        <position position="252"/>
    </location>
    <ligand>
        <name>ATP</name>
        <dbReference type="ChEBI" id="CHEBI:30616"/>
    </ligand>
</feature>
<feature type="binding site" evidence="1">
    <location>
        <position position="274"/>
    </location>
    <ligand>
        <name>ATP</name>
        <dbReference type="ChEBI" id="CHEBI:30616"/>
    </ligand>
</feature>
<feature type="binding site" evidence="1">
    <location>
        <begin position="309"/>
        <end position="311"/>
    </location>
    <ligand>
        <name>ATP</name>
        <dbReference type="ChEBI" id="CHEBI:30616"/>
    </ligand>
</feature>
<feature type="binding site" evidence="1">
    <location>
        <position position="358"/>
    </location>
    <ligand>
        <name>ATP</name>
        <dbReference type="ChEBI" id="CHEBI:30616"/>
    </ligand>
</feature>
<feature type="binding site" evidence="1">
    <location>
        <position position="369"/>
    </location>
    <ligand>
        <name>ATP</name>
        <dbReference type="ChEBI" id="CHEBI:30616"/>
    </ligand>
</feature>
<sequence length="708" mass="81571">MTKDLNTLVSELPEIYQTIFGHPEWDGDAARDCNQRLDLITEQYDNLSRALGRPLNVLDLGCAQGFFSLSLASKGATIVGIDFQQENINVCRALAEENPDFAAEFRVGRIEEVIAALEEGEFDLAIGLSVFHHIVHLHGIDEVKRLLSRLADVTQAVILELAVKEEPLYWGVSQPDDPRELIEQCAFYRLIGEFDTHLSPVPRPMYLVSNHRVLINDFNQPFQHWQNQPYAGAGLAHKRSRRYFFGEDYVCKFFYYDMPHGILTAEESQRNKHELHNEIKFLTQPPAGFDAPAVLAHGENAQSGWLVMEKLPGRLLSDMLAAGEEIDREKILGSLLRSLAALEKQGFWHDDVRPWNVMVDARQHARLIDFGSIVTTPQDCSWPTNLVQSFFVFVNELFAENKSWNGFWRSAPVHPFNLPQPWSNWLYAVWQEPVERWNFALLLALFEKKAKLPSAEQQRGATEQWIIAQETVLLELQSRGRNESAGSEALRGQIHTLEQQMAQLQSAQDAFVEKAQQPVEVSHELTWLGENMEQLAALLQTAQAHAQADVQPELPPETAELLQRLEAANREIHHLSNENQQLRQEIEKIHRSRSWRMTKGYRYLGLQIHLLRQYGFVQRCKHFIKRVLRFVFSFMRKHPQVKHTAVNGLHKLGLYQPAYRLYRRMNPLPHSQYQADAQILSQTELQVMHPELLPPEVYEIYLKLTKNK</sequence>
<comment type="function">
    <text evidence="1">Regulates the length of the LPS O-antigen polysaccharide chain. Stops the polymerization of the chain by phosphorylating and then methylating the phosphate on the terminal sugar. This terminal modification is essential for export of the O-antigen across the inner membrane. WbdD is also required for correct localization of the WbdA mannosyltransferase.</text>
</comment>
<comment type="catalytic activity">
    <reaction evidence="1">
        <text>3-O-phospho-alpha-D-Man-(1-&gt;2)-alpha-D-Man-(1-&gt;2)-[alpha-D-Man-(1-&gt;3)-alpha-D-Man-(1-&gt;3)-alpha-D-Man-(1-&gt;2)-alpha-D-Man-(1-&gt;2)](n)-alpha-D-Man-(1-&gt;3)-alpha-D-Man-(1-&gt;3)-alpha-D-Man-(1-&gt;3)-alpha-D-GlcNAc-di-trans,octa-cis-undecaprenyl diphosphate + S-adenosyl-L-methionine = 3-O-methylphospho-alpha-D-Man-(1-&gt;2)-alpha-D-Man-(1-&gt;2)-[alpha-D-Man-(1-&gt;3)-alpha-D-Man-(1-&gt;3)-alpha-D-Man-(1-&gt;2)-alpha-D-Man-(1-&gt;2)](n)-alpha-D-Man-(1-&gt;3)-alpha-D-Man-(1-&gt;3)-alpha-D-Man-(1-&gt;3)-alpha-D-GlcNAc-di-trans,octa-cis-undecaprenyl diphosphate + S-adenosyl-L-homocysteine</text>
        <dbReference type="Rhea" id="RHEA:36639"/>
        <dbReference type="Rhea" id="RHEA-COMP:9559"/>
        <dbReference type="Rhea" id="RHEA-COMP:9560"/>
        <dbReference type="ChEBI" id="CHEBI:57856"/>
        <dbReference type="ChEBI" id="CHEBI:59789"/>
        <dbReference type="ChEBI" id="CHEBI:74008"/>
        <dbReference type="ChEBI" id="CHEBI:74009"/>
        <dbReference type="EC" id="2.1.1.294"/>
    </reaction>
</comment>
<comment type="catalytic activity">
    <reaction evidence="1">
        <text>alpha-D-Man-(1-&gt;2)-alpha-D-Man-(1-&gt;2)-[alpha-D-Man-(1-&gt;3)-alpha-D-Man-(1-&gt;3)-alpha-D-Man-(1-&gt;2)-alpha-D-Man-(1-&gt;2)](n)-alpha-D-Man-(1-&gt;3)-alpha-D-Man-(1-&gt;3)-alpha-D-Man-(1-&gt;3)-alpha-D-GlcNAc-di-trans,octa-cis-undecaprenyl diphosphate + ATP = 3-O-phospho-alpha-D-Man-(1-&gt;2)-alpha-D-Man-(1-&gt;2)-[alpha-D-Man-(1-&gt;3)-alpha-D-Man-(1-&gt;3)-alpha-D-Man-(1-&gt;2)-alpha-D-Man-(1-&gt;2)](n)-alpha-D-Man-(1-&gt;3)-alpha-D-Man-(1-&gt;3)-alpha-D-Man-(1-&gt;3)-alpha-D-GlcNAc-di-trans,octa-cis-undecaprenyl diphosphate + ADP + H(+)</text>
        <dbReference type="Rhea" id="RHEA:40371"/>
        <dbReference type="Rhea" id="RHEA-COMP:9558"/>
        <dbReference type="Rhea" id="RHEA-COMP:9559"/>
        <dbReference type="ChEBI" id="CHEBI:15378"/>
        <dbReference type="ChEBI" id="CHEBI:30616"/>
        <dbReference type="ChEBI" id="CHEBI:74008"/>
        <dbReference type="ChEBI" id="CHEBI:74010"/>
        <dbReference type="ChEBI" id="CHEBI:456216"/>
        <dbReference type="EC" id="2.7.1.181"/>
    </reaction>
</comment>
<comment type="pathway">
    <text evidence="1">Bacterial outer membrane biogenesis; LPS O-antigen biosynthesis.</text>
</comment>
<comment type="subunit">
    <text evidence="1">Interacts with WbdA.</text>
</comment>
<comment type="subcellular location">
    <subcellularLocation>
        <location evidence="1">Cell inner membrane</location>
        <topology evidence="1">Peripheral membrane protein</topology>
        <orientation evidence="1">Cytoplasmic side</orientation>
    </subcellularLocation>
</comment>
<comment type="similarity">
    <text evidence="3">Belongs to the WbdD family.</text>
</comment>
<reference key="1">
    <citation type="journal article" date="1994" name="Microbiology">
        <title>Genetic analysis of Escherichia coli 09 rfb: identification and DNA sequence of phosphomannomutase and GDP-mannose pyrophosphorylase genes.</title>
        <authorList>
            <person name="Sugiyama T."/>
            <person name="Kido N."/>
            <person name="Komatsu T."/>
            <person name="Ohta M."/>
            <person name="Jann K."/>
            <person name="Jann B."/>
            <person name="Saeki A."/>
            <person name="Kato N."/>
        </authorList>
    </citation>
    <scope>NUCLEOTIDE SEQUENCE [GENOMIC DNA]</scope>
    <source>
        <strain>O9a:K31-:H- / F719</strain>
    </source>
</reference>
<reference key="2">
    <citation type="journal article" date="1995" name="J. Bacteriol.">
        <title>Expression of the O9 polysaccharide of Escherichia coli: sequencing of the E. coli O9 rfb gene cluster, characterization of mannosyl transferases, and evidence for an ATP-binding cassette transport system.</title>
        <authorList>
            <person name="Kido N."/>
            <person name="Torgov V.I."/>
            <person name="Sugiyama T."/>
            <person name="Uchiya K."/>
            <person name="Sugihara H."/>
            <person name="Komatsu T."/>
            <person name="Kato N."/>
            <person name="Jann K."/>
        </authorList>
    </citation>
    <scope>NUCLEOTIDE SEQUENCE [GENOMIC DNA]</scope>
    <source>
        <strain>O9a:K31-:H- / F719</strain>
    </source>
</reference>
<protein>
    <recommendedName>
        <fullName evidence="1">O-antigen chain terminator bifunctional methyltransferase/kinase WbdD</fullName>
    </recommendedName>
    <domain>
        <recommendedName>
            <fullName evidence="1">3-O-phospho-polymannosyl GlcNAc-diphospho-ditrans,octacis-undecaprenol 3-phospho-methyltransferase</fullName>
            <ecNumber evidence="1">2.1.1.294</ecNumber>
        </recommendedName>
    </domain>
    <domain>
        <recommendedName>
            <fullName evidence="1">Polymannosyl GlcNAc-diphospho-ditrans,octacis-undecaprenol kinase</fullName>
            <ecNumber evidence="1">2.7.1.181</ecNumber>
        </recommendedName>
    </domain>
</protein>
<proteinExistence type="inferred from homology"/>
<name>WBDD2_ECOLX</name>
<accession>Q47592</accession>
<organism evidence="4">
    <name type="scientific">Escherichia coli</name>
    <dbReference type="NCBI Taxonomy" id="562"/>
    <lineage>
        <taxon>Bacteria</taxon>
        <taxon>Pseudomonadati</taxon>
        <taxon>Pseudomonadota</taxon>
        <taxon>Gammaproteobacteria</taxon>
        <taxon>Enterobacterales</taxon>
        <taxon>Enterobacteriaceae</taxon>
        <taxon>Escherichia</taxon>
    </lineage>
</organism>
<dbReference type="EC" id="2.1.1.294" evidence="1"/>
<dbReference type="EC" id="2.7.1.181" evidence="1"/>
<dbReference type="EMBL" id="D43637">
    <property type="protein sequence ID" value="BAA07749.1"/>
    <property type="molecule type" value="Genomic_DNA"/>
</dbReference>
<dbReference type="PIR" id="I76774">
    <property type="entry name" value="I76774"/>
</dbReference>
<dbReference type="RefSeq" id="WP_085457613.1">
    <property type="nucleotide sequence ID" value="NZ_JAAFAV010000043.1"/>
</dbReference>
<dbReference type="SMR" id="Q47592"/>
<dbReference type="BioCyc" id="MetaCyc:MONOMER-21644"/>
<dbReference type="UniPathway" id="UPA00281"/>
<dbReference type="EvolutionaryTrace" id="Q47592"/>
<dbReference type="GO" id="GO:0005886">
    <property type="term" value="C:plasma membrane"/>
    <property type="evidence" value="ECO:0007669"/>
    <property type="project" value="UniProtKB-SubCell"/>
</dbReference>
<dbReference type="GO" id="GO:0005524">
    <property type="term" value="F:ATP binding"/>
    <property type="evidence" value="ECO:0007669"/>
    <property type="project" value="UniProtKB-KW"/>
</dbReference>
<dbReference type="GO" id="GO:0008168">
    <property type="term" value="F:methyltransferase activity"/>
    <property type="evidence" value="ECO:0007669"/>
    <property type="project" value="UniProtKB-KW"/>
</dbReference>
<dbReference type="GO" id="GO:0004672">
    <property type="term" value="F:protein kinase activity"/>
    <property type="evidence" value="ECO:0007669"/>
    <property type="project" value="InterPro"/>
</dbReference>
<dbReference type="GO" id="GO:0032259">
    <property type="term" value="P:methylation"/>
    <property type="evidence" value="ECO:0007669"/>
    <property type="project" value="UniProtKB-KW"/>
</dbReference>
<dbReference type="GO" id="GO:0009243">
    <property type="term" value="P:O antigen biosynthetic process"/>
    <property type="evidence" value="ECO:0007669"/>
    <property type="project" value="UniProtKB-UniPathway"/>
</dbReference>
<dbReference type="CDD" id="cd02440">
    <property type="entry name" value="AdoMet_MTases"/>
    <property type="match status" value="1"/>
</dbReference>
<dbReference type="Gene3D" id="3.30.200.20">
    <property type="entry name" value="Phosphorylase Kinase, domain 1"/>
    <property type="match status" value="1"/>
</dbReference>
<dbReference type="Gene3D" id="1.10.510.10">
    <property type="entry name" value="Transferase(Phosphotransferase) domain 1"/>
    <property type="match status" value="1"/>
</dbReference>
<dbReference type="Gene3D" id="3.40.50.150">
    <property type="entry name" value="Vaccinia Virus protein VP39"/>
    <property type="match status" value="1"/>
</dbReference>
<dbReference type="InterPro" id="IPR011009">
    <property type="entry name" value="Kinase-like_dom_sf"/>
</dbReference>
<dbReference type="InterPro" id="IPR025714">
    <property type="entry name" value="Methyltranfer_dom"/>
</dbReference>
<dbReference type="InterPro" id="IPR000719">
    <property type="entry name" value="Prot_kinase_dom"/>
</dbReference>
<dbReference type="InterPro" id="IPR029063">
    <property type="entry name" value="SAM-dependent_MTases_sf"/>
</dbReference>
<dbReference type="PANTHER" id="PTHR43464">
    <property type="entry name" value="METHYLTRANSFERASE"/>
    <property type="match status" value="1"/>
</dbReference>
<dbReference type="PANTHER" id="PTHR43464:SF19">
    <property type="entry name" value="UBIQUINONE BIOSYNTHESIS O-METHYLTRANSFERASE, MITOCHONDRIAL"/>
    <property type="match status" value="1"/>
</dbReference>
<dbReference type="Pfam" id="PF13847">
    <property type="entry name" value="Methyltransf_31"/>
    <property type="match status" value="1"/>
</dbReference>
<dbReference type="Pfam" id="PF00069">
    <property type="entry name" value="Pkinase"/>
    <property type="match status" value="1"/>
</dbReference>
<dbReference type="SMART" id="SM00220">
    <property type="entry name" value="S_TKc"/>
    <property type="match status" value="1"/>
</dbReference>
<dbReference type="SUPFAM" id="SSF56112">
    <property type="entry name" value="Protein kinase-like (PK-like)"/>
    <property type="match status" value="1"/>
</dbReference>
<dbReference type="SUPFAM" id="SSF53335">
    <property type="entry name" value="S-adenosyl-L-methionine-dependent methyltransferases"/>
    <property type="match status" value="1"/>
</dbReference>